<dbReference type="EC" id="2.1.1.192" evidence="1"/>
<dbReference type="EMBL" id="CP000383">
    <property type="protein sequence ID" value="ABG60364.1"/>
    <property type="molecule type" value="Genomic_DNA"/>
</dbReference>
<dbReference type="SMR" id="Q11QF0"/>
<dbReference type="STRING" id="269798.CHU_3124"/>
<dbReference type="KEGG" id="chu:CHU_3124"/>
<dbReference type="eggNOG" id="COG0820">
    <property type="taxonomic scope" value="Bacteria"/>
</dbReference>
<dbReference type="HOGENOM" id="CLU_029101_2_0_10"/>
<dbReference type="OrthoDB" id="9793973at2"/>
<dbReference type="Proteomes" id="UP000001822">
    <property type="component" value="Chromosome"/>
</dbReference>
<dbReference type="GO" id="GO:0005737">
    <property type="term" value="C:cytoplasm"/>
    <property type="evidence" value="ECO:0007669"/>
    <property type="project" value="UniProtKB-SubCell"/>
</dbReference>
<dbReference type="GO" id="GO:0051539">
    <property type="term" value="F:4 iron, 4 sulfur cluster binding"/>
    <property type="evidence" value="ECO:0007669"/>
    <property type="project" value="UniProtKB-UniRule"/>
</dbReference>
<dbReference type="GO" id="GO:0046872">
    <property type="term" value="F:metal ion binding"/>
    <property type="evidence" value="ECO:0007669"/>
    <property type="project" value="UniProtKB-KW"/>
</dbReference>
<dbReference type="GO" id="GO:0070040">
    <property type="term" value="F:rRNA (adenine(2503)-C2-)-methyltransferase activity"/>
    <property type="evidence" value="ECO:0007669"/>
    <property type="project" value="UniProtKB-UniRule"/>
</dbReference>
<dbReference type="GO" id="GO:0019843">
    <property type="term" value="F:rRNA binding"/>
    <property type="evidence" value="ECO:0007669"/>
    <property type="project" value="UniProtKB-UniRule"/>
</dbReference>
<dbReference type="GO" id="GO:0002935">
    <property type="term" value="F:tRNA (adenine(37)-C2)-methyltransferase activity"/>
    <property type="evidence" value="ECO:0007669"/>
    <property type="project" value="UniProtKB-UniRule"/>
</dbReference>
<dbReference type="GO" id="GO:0000049">
    <property type="term" value="F:tRNA binding"/>
    <property type="evidence" value="ECO:0007669"/>
    <property type="project" value="UniProtKB-UniRule"/>
</dbReference>
<dbReference type="GO" id="GO:0070475">
    <property type="term" value="P:rRNA base methylation"/>
    <property type="evidence" value="ECO:0007669"/>
    <property type="project" value="UniProtKB-UniRule"/>
</dbReference>
<dbReference type="GO" id="GO:0030488">
    <property type="term" value="P:tRNA methylation"/>
    <property type="evidence" value="ECO:0007669"/>
    <property type="project" value="UniProtKB-UniRule"/>
</dbReference>
<dbReference type="CDD" id="cd01335">
    <property type="entry name" value="Radical_SAM"/>
    <property type="match status" value="1"/>
</dbReference>
<dbReference type="FunFam" id="3.20.20.70:FF:000014">
    <property type="entry name" value="Probable dual-specificity RNA methyltransferase RlmN"/>
    <property type="match status" value="1"/>
</dbReference>
<dbReference type="Gene3D" id="1.10.150.530">
    <property type="match status" value="1"/>
</dbReference>
<dbReference type="Gene3D" id="3.20.20.70">
    <property type="entry name" value="Aldolase class I"/>
    <property type="match status" value="1"/>
</dbReference>
<dbReference type="HAMAP" id="MF_01849">
    <property type="entry name" value="RNA_methyltr_RlmN"/>
    <property type="match status" value="1"/>
</dbReference>
<dbReference type="InterPro" id="IPR013785">
    <property type="entry name" value="Aldolase_TIM"/>
</dbReference>
<dbReference type="InterPro" id="IPR040072">
    <property type="entry name" value="Methyltransferase_A"/>
</dbReference>
<dbReference type="InterPro" id="IPR048641">
    <property type="entry name" value="RlmN_N"/>
</dbReference>
<dbReference type="InterPro" id="IPR027492">
    <property type="entry name" value="RNA_MTrfase_RlmN"/>
</dbReference>
<dbReference type="InterPro" id="IPR004383">
    <property type="entry name" value="rRNA_lsu_MTrfase_RlmN/Cfr"/>
</dbReference>
<dbReference type="InterPro" id="IPR007197">
    <property type="entry name" value="rSAM"/>
</dbReference>
<dbReference type="NCBIfam" id="TIGR00048">
    <property type="entry name" value="rRNA_mod_RlmN"/>
    <property type="match status" value="1"/>
</dbReference>
<dbReference type="PANTHER" id="PTHR30544">
    <property type="entry name" value="23S RRNA METHYLTRANSFERASE"/>
    <property type="match status" value="1"/>
</dbReference>
<dbReference type="PANTHER" id="PTHR30544:SF5">
    <property type="entry name" value="RADICAL SAM CORE DOMAIN-CONTAINING PROTEIN"/>
    <property type="match status" value="1"/>
</dbReference>
<dbReference type="Pfam" id="PF04055">
    <property type="entry name" value="Radical_SAM"/>
    <property type="match status" value="1"/>
</dbReference>
<dbReference type="Pfam" id="PF21016">
    <property type="entry name" value="RlmN_N"/>
    <property type="match status" value="1"/>
</dbReference>
<dbReference type="PIRSF" id="PIRSF006004">
    <property type="entry name" value="CHP00048"/>
    <property type="match status" value="1"/>
</dbReference>
<dbReference type="SFLD" id="SFLDF00275">
    <property type="entry name" value="adenosine_C2_methyltransferase"/>
    <property type="match status" value="1"/>
</dbReference>
<dbReference type="SFLD" id="SFLDS00029">
    <property type="entry name" value="Radical_SAM"/>
    <property type="match status" value="1"/>
</dbReference>
<dbReference type="SUPFAM" id="SSF102114">
    <property type="entry name" value="Radical SAM enzymes"/>
    <property type="match status" value="1"/>
</dbReference>
<dbReference type="PROSITE" id="PS51918">
    <property type="entry name" value="RADICAL_SAM"/>
    <property type="match status" value="1"/>
</dbReference>
<organism>
    <name type="scientific">Cytophaga hutchinsonii (strain ATCC 33406 / DSM 1761 / CIP 103989 / NBRC 15051 / NCIMB 9469 / D465)</name>
    <dbReference type="NCBI Taxonomy" id="269798"/>
    <lineage>
        <taxon>Bacteria</taxon>
        <taxon>Pseudomonadati</taxon>
        <taxon>Bacteroidota</taxon>
        <taxon>Cytophagia</taxon>
        <taxon>Cytophagales</taxon>
        <taxon>Cytophagaceae</taxon>
        <taxon>Cytophaga</taxon>
    </lineage>
</organism>
<gene>
    <name evidence="1" type="primary">rlmN</name>
    <name type="ordered locus">CHU_3124</name>
</gene>
<proteinExistence type="inferred from homology"/>
<comment type="function">
    <text evidence="1">Specifically methylates position 2 of adenine 2503 in 23S rRNA and position 2 of adenine 37 in tRNAs.</text>
</comment>
<comment type="catalytic activity">
    <reaction evidence="1">
        <text>adenosine(2503) in 23S rRNA + 2 reduced [2Fe-2S]-[ferredoxin] + 2 S-adenosyl-L-methionine = 2-methyladenosine(2503) in 23S rRNA + 5'-deoxyadenosine + L-methionine + 2 oxidized [2Fe-2S]-[ferredoxin] + S-adenosyl-L-homocysteine</text>
        <dbReference type="Rhea" id="RHEA:42916"/>
        <dbReference type="Rhea" id="RHEA-COMP:10000"/>
        <dbReference type="Rhea" id="RHEA-COMP:10001"/>
        <dbReference type="Rhea" id="RHEA-COMP:10152"/>
        <dbReference type="Rhea" id="RHEA-COMP:10282"/>
        <dbReference type="ChEBI" id="CHEBI:17319"/>
        <dbReference type="ChEBI" id="CHEBI:33737"/>
        <dbReference type="ChEBI" id="CHEBI:33738"/>
        <dbReference type="ChEBI" id="CHEBI:57844"/>
        <dbReference type="ChEBI" id="CHEBI:57856"/>
        <dbReference type="ChEBI" id="CHEBI:59789"/>
        <dbReference type="ChEBI" id="CHEBI:74411"/>
        <dbReference type="ChEBI" id="CHEBI:74497"/>
        <dbReference type="EC" id="2.1.1.192"/>
    </reaction>
</comment>
<comment type="catalytic activity">
    <reaction evidence="1">
        <text>adenosine(37) in tRNA + 2 reduced [2Fe-2S]-[ferredoxin] + 2 S-adenosyl-L-methionine = 2-methyladenosine(37) in tRNA + 5'-deoxyadenosine + L-methionine + 2 oxidized [2Fe-2S]-[ferredoxin] + S-adenosyl-L-homocysteine</text>
        <dbReference type="Rhea" id="RHEA:43332"/>
        <dbReference type="Rhea" id="RHEA-COMP:10000"/>
        <dbReference type="Rhea" id="RHEA-COMP:10001"/>
        <dbReference type="Rhea" id="RHEA-COMP:10162"/>
        <dbReference type="Rhea" id="RHEA-COMP:10485"/>
        <dbReference type="ChEBI" id="CHEBI:17319"/>
        <dbReference type="ChEBI" id="CHEBI:33737"/>
        <dbReference type="ChEBI" id="CHEBI:33738"/>
        <dbReference type="ChEBI" id="CHEBI:57844"/>
        <dbReference type="ChEBI" id="CHEBI:57856"/>
        <dbReference type="ChEBI" id="CHEBI:59789"/>
        <dbReference type="ChEBI" id="CHEBI:74411"/>
        <dbReference type="ChEBI" id="CHEBI:74497"/>
        <dbReference type="EC" id="2.1.1.192"/>
    </reaction>
</comment>
<comment type="cofactor">
    <cofactor evidence="1">
        <name>[4Fe-4S] cluster</name>
        <dbReference type="ChEBI" id="CHEBI:49883"/>
    </cofactor>
    <text evidence="1">Binds 1 [4Fe-4S] cluster. The cluster is coordinated with 3 cysteines and an exchangeable S-adenosyl-L-methionine.</text>
</comment>
<comment type="subcellular location">
    <subcellularLocation>
        <location evidence="1">Cytoplasm</location>
    </subcellularLocation>
</comment>
<comment type="miscellaneous">
    <text evidence="1">Reaction proceeds by a ping-pong mechanism involving intermediate methylation of a conserved cysteine residue.</text>
</comment>
<comment type="similarity">
    <text evidence="1">Belongs to the radical SAM superfamily. RlmN family.</text>
</comment>
<protein>
    <recommendedName>
        <fullName evidence="1">Probable dual-specificity RNA methyltransferase RlmN</fullName>
        <ecNumber evidence="1">2.1.1.192</ecNumber>
    </recommendedName>
    <alternativeName>
        <fullName evidence="1">23S rRNA (adenine(2503)-C(2))-methyltransferase</fullName>
    </alternativeName>
    <alternativeName>
        <fullName evidence="1">23S rRNA m2A2503 methyltransferase</fullName>
    </alternativeName>
    <alternativeName>
        <fullName evidence="1">Ribosomal RNA large subunit methyltransferase N</fullName>
    </alternativeName>
    <alternativeName>
        <fullName evidence="1">tRNA (adenine(37)-C(2))-methyltransferase</fullName>
    </alternativeName>
    <alternativeName>
        <fullName evidence="1">tRNA m2A37 methyltransferase</fullName>
    </alternativeName>
</protein>
<name>RLMN_CYTH3</name>
<reference key="1">
    <citation type="journal article" date="2007" name="Appl. Environ. Microbiol.">
        <title>Genome sequence of the cellulolytic gliding bacterium Cytophaga hutchinsonii.</title>
        <authorList>
            <person name="Xie G."/>
            <person name="Bruce D.C."/>
            <person name="Challacombe J.F."/>
            <person name="Chertkov O."/>
            <person name="Detter J.C."/>
            <person name="Gilna P."/>
            <person name="Han C.S."/>
            <person name="Lucas S."/>
            <person name="Misra M."/>
            <person name="Myers G.L."/>
            <person name="Richardson P."/>
            <person name="Tapia R."/>
            <person name="Thayer N."/>
            <person name="Thompson L.S."/>
            <person name="Brettin T.S."/>
            <person name="Henrissat B."/>
            <person name="Wilson D.B."/>
            <person name="McBride M.J."/>
        </authorList>
    </citation>
    <scope>NUCLEOTIDE SEQUENCE [LARGE SCALE GENOMIC DNA]</scope>
    <source>
        <strain>ATCC 33406 / DSM 1761 / JCM 20678 / CIP 103989 / IAM 12607 / NBRC 15051 / NCIMB 9469 / D465</strain>
    </source>
</reference>
<accession>Q11QF0</accession>
<evidence type="ECO:0000255" key="1">
    <source>
        <dbReference type="HAMAP-Rule" id="MF_01849"/>
    </source>
</evidence>
<evidence type="ECO:0000255" key="2">
    <source>
        <dbReference type="PROSITE-ProRule" id="PRU01266"/>
    </source>
</evidence>
<sequence>MILLNLMLYFCSMQTTSTEIKKKCIRSLSAEELKDFFVASGEKAFRSRQVYEWLWKRSARSFEQMTNLSKETRTLLENNFSINPVTISQKQVSTDGTIKFGFKLHDGYLVEGVLIPADDRMTACISSQVGCSLTCKFCATGYMDRKRNLEPYEIYDQVVLIKEAAEEHYQTPLTNIVLMGMGEPLLNYTNVLKGIDKVTSEEGLHIASKRITLSTAGIAKMITKLGDEKVKFRLALSLHAANDVKRNTIMPINETNNLNVLKESLLHFCKETGSSVTFEYIVFDGVNDTAQDAKELYAFAKNIPCKINIIEYNPIQEADFMNTSVDKLEQFKKVLTDKGIIVNIRRSRGKDIDAACGQLAIKEVK</sequence>
<feature type="chain" id="PRO_0000350143" description="Probable dual-specificity RNA methyltransferase RlmN">
    <location>
        <begin position="1"/>
        <end position="365"/>
    </location>
</feature>
<feature type="domain" description="Radical SAM core" evidence="2">
    <location>
        <begin position="117"/>
        <end position="351"/>
    </location>
</feature>
<feature type="active site" description="Proton acceptor" evidence="1">
    <location>
        <position position="111"/>
    </location>
</feature>
<feature type="active site" description="S-methylcysteine intermediate" evidence="1">
    <location>
        <position position="356"/>
    </location>
</feature>
<feature type="binding site" evidence="1">
    <location>
        <position position="131"/>
    </location>
    <ligand>
        <name>[4Fe-4S] cluster</name>
        <dbReference type="ChEBI" id="CHEBI:49883"/>
        <note>4Fe-4S-S-AdoMet</note>
    </ligand>
</feature>
<feature type="binding site" evidence="1">
    <location>
        <position position="135"/>
    </location>
    <ligand>
        <name>[4Fe-4S] cluster</name>
        <dbReference type="ChEBI" id="CHEBI:49883"/>
        <note>4Fe-4S-S-AdoMet</note>
    </ligand>
</feature>
<feature type="binding site" evidence="1">
    <location>
        <position position="138"/>
    </location>
    <ligand>
        <name>[4Fe-4S] cluster</name>
        <dbReference type="ChEBI" id="CHEBI:49883"/>
        <note>4Fe-4S-S-AdoMet</note>
    </ligand>
</feature>
<feature type="binding site" evidence="1">
    <location>
        <begin position="182"/>
        <end position="183"/>
    </location>
    <ligand>
        <name>S-adenosyl-L-methionine</name>
        <dbReference type="ChEBI" id="CHEBI:59789"/>
    </ligand>
</feature>
<feature type="binding site" evidence="1">
    <location>
        <position position="214"/>
    </location>
    <ligand>
        <name>S-adenosyl-L-methionine</name>
        <dbReference type="ChEBI" id="CHEBI:59789"/>
    </ligand>
</feature>
<feature type="binding site" evidence="1">
    <location>
        <begin position="237"/>
        <end position="239"/>
    </location>
    <ligand>
        <name>S-adenosyl-L-methionine</name>
        <dbReference type="ChEBI" id="CHEBI:59789"/>
    </ligand>
</feature>
<feature type="binding site" evidence="1">
    <location>
        <position position="313"/>
    </location>
    <ligand>
        <name>S-adenosyl-L-methionine</name>
        <dbReference type="ChEBI" id="CHEBI:59789"/>
    </ligand>
</feature>
<feature type="disulfide bond" description="(transient)" evidence="1">
    <location>
        <begin position="124"/>
        <end position="356"/>
    </location>
</feature>
<keyword id="KW-0004">4Fe-4S</keyword>
<keyword id="KW-0963">Cytoplasm</keyword>
<keyword id="KW-1015">Disulfide bond</keyword>
<keyword id="KW-0408">Iron</keyword>
<keyword id="KW-0411">Iron-sulfur</keyword>
<keyword id="KW-0479">Metal-binding</keyword>
<keyword id="KW-0489">Methyltransferase</keyword>
<keyword id="KW-1185">Reference proteome</keyword>
<keyword id="KW-0698">rRNA processing</keyword>
<keyword id="KW-0949">S-adenosyl-L-methionine</keyword>
<keyword id="KW-0808">Transferase</keyword>
<keyword id="KW-0819">tRNA processing</keyword>